<protein>
    <recommendedName>
        <fullName evidence="1">Small ribosomal subunit protein uS2c</fullName>
    </recommendedName>
    <alternativeName>
        <fullName>30S ribosomal protein S2, chloroplastic</fullName>
    </alternativeName>
</protein>
<evidence type="ECO:0000305" key="1"/>
<organism>
    <name type="scientific">Ochrosphaera neapolitana</name>
    <dbReference type="NCBI Taxonomy" id="35137"/>
    <lineage>
        <taxon>Eukaryota</taxon>
        <taxon>Haptista</taxon>
        <taxon>Haptophyta</taxon>
        <taxon>Prymnesiophyceae</taxon>
        <taxon>Coccolithales</taxon>
        <taxon>Hymenomonadaceae</taxon>
        <taxon>Ochrosphaera</taxon>
    </lineage>
</organism>
<gene>
    <name type="primary">rps2</name>
</gene>
<sequence length="34" mass="3640">NLVDIPIPANDDAIKSIKLIVSKLSTGIQQGQSY</sequence>
<feature type="chain" id="PRO_0000134304" description="Small ribosomal subunit protein uS2c">
    <location>
        <begin position="1" status="less than"/>
        <end position="34"/>
    </location>
</feature>
<feature type="non-terminal residue">
    <location>
        <position position="1"/>
    </location>
</feature>
<proteinExistence type="inferred from homology"/>
<accession>Q40606</accession>
<comment type="subcellular location">
    <subcellularLocation>
        <location>Plastid</location>
        <location>Chloroplast</location>
    </subcellularLocation>
</comment>
<comment type="similarity">
    <text evidence="1">Belongs to the universal ribosomal protein uS2 family.</text>
</comment>
<dbReference type="EMBL" id="X99078">
    <property type="protein sequence ID" value="CAA67534.1"/>
    <property type="molecule type" value="Genomic_DNA"/>
</dbReference>
<dbReference type="SMR" id="Q40606"/>
<dbReference type="GO" id="GO:0009507">
    <property type="term" value="C:chloroplast"/>
    <property type="evidence" value="ECO:0007669"/>
    <property type="project" value="UniProtKB-SubCell"/>
</dbReference>
<dbReference type="GO" id="GO:1990904">
    <property type="term" value="C:ribonucleoprotein complex"/>
    <property type="evidence" value="ECO:0007669"/>
    <property type="project" value="UniProtKB-KW"/>
</dbReference>
<dbReference type="GO" id="GO:0005840">
    <property type="term" value="C:ribosome"/>
    <property type="evidence" value="ECO:0007669"/>
    <property type="project" value="UniProtKB-KW"/>
</dbReference>
<dbReference type="GO" id="GO:0003735">
    <property type="term" value="F:structural constituent of ribosome"/>
    <property type="evidence" value="ECO:0007669"/>
    <property type="project" value="InterPro"/>
</dbReference>
<dbReference type="GO" id="GO:0006412">
    <property type="term" value="P:translation"/>
    <property type="evidence" value="ECO:0007669"/>
    <property type="project" value="InterPro"/>
</dbReference>
<dbReference type="Gene3D" id="3.40.50.10490">
    <property type="entry name" value="Glucose-6-phosphate isomerase like protein, domain 1"/>
    <property type="match status" value="1"/>
</dbReference>
<dbReference type="InterPro" id="IPR001865">
    <property type="entry name" value="Ribosomal_uS2"/>
</dbReference>
<dbReference type="InterPro" id="IPR023591">
    <property type="entry name" value="Ribosomal_uS2_flav_dom_sf"/>
</dbReference>
<dbReference type="Pfam" id="PF00318">
    <property type="entry name" value="Ribosomal_S2"/>
    <property type="match status" value="1"/>
</dbReference>
<dbReference type="SUPFAM" id="SSF52313">
    <property type="entry name" value="Ribosomal protein S2"/>
    <property type="match status" value="1"/>
</dbReference>
<reference key="1">
    <citation type="submission" date="1996-07" db="EMBL/GenBank/DDBJ databases">
        <authorList>
            <person name="Huss V.A.R."/>
            <person name="Tietze A.C."/>
            <person name="Julius C."/>
        </authorList>
    </citation>
    <scope>NUCLEOTIDE SEQUENCE [GENOMIC DNA]</scope>
    <source>
        <strain>CCMP593 / OCHRO / Plymouth163</strain>
    </source>
</reference>
<name>RR2_OCHNE</name>
<geneLocation type="chloroplast"/>
<keyword id="KW-0150">Chloroplast</keyword>
<keyword id="KW-0934">Plastid</keyword>
<keyword id="KW-0687">Ribonucleoprotein</keyword>
<keyword id="KW-0689">Ribosomal protein</keyword>